<gene>
    <name evidence="1" type="primary">rpl33</name>
</gene>
<geneLocation type="chloroplast"/>
<reference key="1">
    <citation type="journal article" date="2008" name="Mol. Phylogenet. Evol.">
        <title>Complete plastid genome sequence of the chickpea (Cicer arietinum) and the phylogenetic distribution of rps12 and clpP intron losses among legumes (Leguminosae).</title>
        <authorList>
            <person name="Jansen R.K."/>
            <person name="Wojciechowski M.F."/>
            <person name="Sanniyasi E."/>
            <person name="Lee S.-B."/>
            <person name="Daniell H."/>
        </authorList>
    </citation>
    <scope>NUCLEOTIDE SEQUENCE [LARGE SCALE GENOMIC DNA]</scope>
</reference>
<organism>
    <name type="scientific">Cicer arietinum</name>
    <name type="common">Chickpea</name>
    <name type="synonym">Garbanzo</name>
    <dbReference type="NCBI Taxonomy" id="3827"/>
    <lineage>
        <taxon>Eukaryota</taxon>
        <taxon>Viridiplantae</taxon>
        <taxon>Streptophyta</taxon>
        <taxon>Embryophyta</taxon>
        <taxon>Tracheophyta</taxon>
        <taxon>Spermatophyta</taxon>
        <taxon>Magnoliopsida</taxon>
        <taxon>eudicotyledons</taxon>
        <taxon>Gunneridae</taxon>
        <taxon>Pentapetalae</taxon>
        <taxon>rosids</taxon>
        <taxon>fabids</taxon>
        <taxon>Fabales</taxon>
        <taxon>Fabaceae</taxon>
        <taxon>Papilionoideae</taxon>
        <taxon>50 kb inversion clade</taxon>
        <taxon>NPAAA clade</taxon>
        <taxon>Hologalegina</taxon>
        <taxon>IRL clade</taxon>
        <taxon>Cicereae</taxon>
        <taxon>Cicer</taxon>
    </lineage>
</organism>
<keyword id="KW-0150">Chloroplast</keyword>
<keyword id="KW-0934">Plastid</keyword>
<keyword id="KW-1185">Reference proteome</keyword>
<keyword id="KW-0687">Ribonucleoprotein</keyword>
<keyword id="KW-0689">Ribosomal protein</keyword>
<evidence type="ECO:0000255" key="1">
    <source>
        <dbReference type="HAMAP-Rule" id="MF_00294"/>
    </source>
</evidence>
<evidence type="ECO:0000305" key="2"/>
<sequence length="66" mass="7691">MAKGKDIRITVILECTSCDKKSVNKESRGISRYITQKNRHNTPSRLELRKFCPFCCKHTIHAEIKK</sequence>
<feature type="chain" id="PRO_0000356793" description="Large ribosomal subunit protein bL33c">
    <location>
        <begin position="1"/>
        <end position="66"/>
    </location>
</feature>
<dbReference type="EMBL" id="EU835853">
    <property type="protein sequence ID" value="ACH41091.1"/>
    <property type="molecule type" value="Genomic_DNA"/>
</dbReference>
<dbReference type="RefSeq" id="YP_002149754.1">
    <property type="nucleotide sequence ID" value="NC_011163.1"/>
</dbReference>
<dbReference type="PaxDb" id="3827-XP_004516898.1"/>
<dbReference type="GeneID" id="6797496"/>
<dbReference type="KEGG" id="cam:6797496"/>
<dbReference type="eggNOG" id="ENOG502S7HT">
    <property type="taxonomic scope" value="Eukaryota"/>
</dbReference>
<dbReference type="OrthoDB" id="361870at2759"/>
<dbReference type="Proteomes" id="UP000087171">
    <property type="component" value="Chloroplast Pltd"/>
</dbReference>
<dbReference type="GO" id="GO:0009507">
    <property type="term" value="C:chloroplast"/>
    <property type="evidence" value="ECO:0007669"/>
    <property type="project" value="UniProtKB-SubCell"/>
</dbReference>
<dbReference type="GO" id="GO:1990904">
    <property type="term" value="C:ribonucleoprotein complex"/>
    <property type="evidence" value="ECO:0007669"/>
    <property type="project" value="UniProtKB-KW"/>
</dbReference>
<dbReference type="GO" id="GO:0005840">
    <property type="term" value="C:ribosome"/>
    <property type="evidence" value="ECO:0007669"/>
    <property type="project" value="UniProtKB-KW"/>
</dbReference>
<dbReference type="GO" id="GO:0003735">
    <property type="term" value="F:structural constituent of ribosome"/>
    <property type="evidence" value="ECO:0007669"/>
    <property type="project" value="InterPro"/>
</dbReference>
<dbReference type="GO" id="GO:0006412">
    <property type="term" value="P:translation"/>
    <property type="evidence" value="ECO:0007669"/>
    <property type="project" value="UniProtKB-UniRule"/>
</dbReference>
<dbReference type="Gene3D" id="2.20.28.120">
    <property type="entry name" value="Ribosomal protein L33"/>
    <property type="match status" value="1"/>
</dbReference>
<dbReference type="HAMAP" id="MF_00294">
    <property type="entry name" value="Ribosomal_bL33"/>
    <property type="match status" value="1"/>
</dbReference>
<dbReference type="InterPro" id="IPR001705">
    <property type="entry name" value="Ribosomal_bL33"/>
</dbReference>
<dbReference type="InterPro" id="IPR018264">
    <property type="entry name" value="Ribosomal_bL33_CS"/>
</dbReference>
<dbReference type="InterPro" id="IPR038584">
    <property type="entry name" value="Ribosomal_bL33_sf"/>
</dbReference>
<dbReference type="InterPro" id="IPR011332">
    <property type="entry name" value="Ribosomal_zn-bd"/>
</dbReference>
<dbReference type="NCBIfam" id="NF001764">
    <property type="entry name" value="PRK00504.1"/>
    <property type="match status" value="1"/>
</dbReference>
<dbReference type="NCBIfam" id="NF001860">
    <property type="entry name" value="PRK00595.1"/>
    <property type="match status" value="1"/>
</dbReference>
<dbReference type="NCBIfam" id="TIGR01023">
    <property type="entry name" value="rpmG_bact"/>
    <property type="match status" value="1"/>
</dbReference>
<dbReference type="PANTHER" id="PTHR43168">
    <property type="entry name" value="50S RIBOSOMAL PROTEIN L33, CHLOROPLASTIC"/>
    <property type="match status" value="1"/>
</dbReference>
<dbReference type="PANTHER" id="PTHR43168:SF2">
    <property type="entry name" value="LARGE RIBOSOMAL SUBUNIT PROTEIN BL33C"/>
    <property type="match status" value="1"/>
</dbReference>
<dbReference type="Pfam" id="PF00471">
    <property type="entry name" value="Ribosomal_L33"/>
    <property type="match status" value="1"/>
</dbReference>
<dbReference type="SUPFAM" id="SSF57829">
    <property type="entry name" value="Zn-binding ribosomal proteins"/>
    <property type="match status" value="1"/>
</dbReference>
<dbReference type="PROSITE" id="PS00582">
    <property type="entry name" value="RIBOSOMAL_L33"/>
    <property type="match status" value="1"/>
</dbReference>
<comment type="subcellular location">
    <subcellularLocation>
        <location>Plastid</location>
        <location>Chloroplast</location>
    </subcellularLocation>
</comment>
<comment type="similarity">
    <text evidence="1">Belongs to the bacterial ribosomal protein bL33 family.</text>
</comment>
<protein>
    <recommendedName>
        <fullName evidence="1">Large ribosomal subunit protein bL33c</fullName>
    </recommendedName>
    <alternativeName>
        <fullName evidence="2">50S ribosomal protein L33, chloroplastic</fullName>
    </alternativeName>
</protein>
<accession>B5LMP5</accession>
<name>RK33_CICAR</name>
<proteinExistence type="inferred from homology"/>